<protein>
    <recommendedName>
        <fullName evidence="1">Uridylate kinase</fullName>
        <shortName evidence="1">UK</shortName>
        <ecNumber evidence="1">2.7.4.22</ecNumber>
    </recommendedName>
    <alternativeName>
        <fullName evidence="1">Uridine monophosphate kinase</fullName>
        <shortName evidence="1">UMP kinase</shortName>
        <shortName evidence="1">UMPK</shortName>
    </alternativeName>
</protein>
<gene>
    <name evidence="1" type="primary">pyrH</name>
    <name type="ordered locus">LS215_1334</name>
</gene>
<sequence>MNIILKISGKFFDEDNVNNLIVLRESIRELTDNGFRVGIVTGGGSTARRYIKLAREIGIGEAYLDLLGIWASRLNAYLVMFSLQDLAYMHVPQSLEEFIQDWSHGKVVVTGGFQPGQSTAAVAALVAEASSSKTLVVATNVDGVYEKDPRVYTDVKLIPHLTTQDLRKILEGSQSVQAGTYELLDPLAIKIVERSKIRVVVMNYRKLNRIINILKGEEVSSIIEPT</sequence>
<evidence type="ECO:0000255" key="1">
    <source>
        <dbReference type="HAMAP-Rule" id="MF_01220"/>
    </source>
</evidence>
<accession>C3MPM9</accession>
<organism>
    <name type="scientific">Saccharolobus islandicus (strain L.S.2.15 / Lassen #1)</name>
    <name type="common">Sulfolobus islandicus</name>
    <dbReference type="NCBI Taxonomy" id="429572"/>
    <lineage>
        <taxon>Archaea</taxon>
        <taxon>Thermoproteota</taxon>
        <taxon>Thermoprotei</taxon>
        <taxon>Sulfolobales</taxon>
        <taxon>Sulfolobaceae</taxon>
        <taxon>Saccharolobus</taxon>
    </lineage>
</organism>
<feature type="chain" id="PRO_1000213956" description="Uridylate kinase">
    <location>
        <begin position="1"/>
        <end position="226"/>
    </location>
</feature>
<feature type="binding site" evidence="1">
    <location>
        <begin position="6"/>
        <end position="10"/>
    </location>
    <ligand>
        <name>ATP</name>
        <dbReference type="ChEBI" id="CHEBI:30616"/>
    </ligand>
</feature>
<feature type="binding site" evidence="1">
    <location>
        <position position="43"/>
    </location>
    <ligand>
        <name>UMP</name>
        <dbReference type="ChEBI" id="CHEBI:57865"/>
    </ligand>
</feature>
<feature type="binding site" evidence="1">
    <location>
        <position position="44"/>
    </location>
    <ligand>
        <name>ATP</name>
        <dbReference type="ChEBI" id="CHEBI:30616"/>
    </ligand>
</feature>
<feature type="binding site" evidence="1">
    <location>
        <position position="48"/>
    </location>
    <ligand>
        <name>ATP</name>
        <dbReference type="ChEBI" id="CHEBI:30616"/>
    </ligand>
</feature>
<feature type="binding site" evidence="1">
    <location>
        <position position="65"/>
    </location>
    <ligand>
        <name>UMP</name>
        <dbReference type="ChEBI" id="CHEBI:57865"/>
    </ligand>
</feature>
<feature type="binding site" evidence="1">
    <location>
        <begin position="113"/>
        <end position="119"/>
    </location>
    <ligand>
        <name>UMP</name>
        <dbReference type="ChEBI" id="CHEBI:57865"/>
    </ligand>
</feature>
<feature type="binding site" evidence="1">
    <location>
        <position position="139"/>
    </location>
    <ligand>
        <name>ATP</name>
        <dbReference type="ChEBI" id="CHEBI:30616"/>
    </ligand>
</feature>
<feature type="binding site" evidence="1">
    <location>
        <position position="140"/>
    </location>
    <ligand>
        <name>ATP</name>
        <dbReference type="ChEBI" id="CHEBI:30616"/>
    </ligand>
</feature>
<feature type="binding site" evidence="1">
    <location>
        <position position="145"/>
    </location>
    <ligand>
        <name>ATP</name>
        <dbReference type="ChEBI" id="CHEBI:30616"/>
    </ligand>
</feature>
<feature type="binding site" evidence="1">
    <location>
        <position position="148"/>
    </location>
    <ligand>
        <name>ATP</name>
        <dbReference type="ChEBI" id="CHEBI:30616"/>
    </ligand>
</feature>
<keyword id="KW-0067">ATP-binding</keyword>
<keyword id="KW-0963">Cytoplasm</keyword>
<keyword id="KW-0418">Kinase</keyword>
<keyword id="KW-0547">Nucleotide-binding</keyword>
<keyword id="KW-0665">Pyrimidine biosynthesis</keyword>
<keyword id="KW-0808">Transferase</keyword>
<proteinExistence type="inferred from homology"/>
<dbReference type="EC" id="2.7.4.22" evidence="1"/>
<dbReference type="EMBL" id="CP001399">
    <property type="protein sequence ID" value="ACP35342.1"/>
    <property type="molecule type" value="Genomic_DNA"/>
</dbReference>
<dbReference type="RefSeq" id="WP_012711255.1">
    <property type="nucleotide sequence ID" value="NC_012589.1"/>
</dbReference>
<dbReference type="SMR" id="C3MPM9"/>
<dbReference type="GeneID" id="84061562"/>
<dbReference type="KEGG" id="sis:LS215_1334"/>
<dbReference type="HOGENOM" id="CLU_079546_0_0_2"/>
<dbReference type="OrthoDB" id="372251at2157"/>
<dbReference type="UniPathway" id="UPA00159">
    <property type="reaction ID" value="UER00275"/>
</dbReference>
<dbReference type="Proteomes" id="UP000001747">
    <property type="component" value="Chromosome"/>
</dbReference>
<dbReference type="GO" id="GO:0005737">
    <property type="term" value="C:cytoplasm"/>
    <property type="evidence" value="ECO:0007669"/>
    <property type="project" value="UniProtKB-SubCell"/>
</dbReference>
<dbReference type="GO" id="GO:0005524">
    <property type="term" value="F:ATP binding"/>
    <property type="evidence" value="ECO:0007669"/>
    <property type="project" value="UniProtKB-KW"/>
</dbReference>
<dbReference type="GO" id="GO:0033862">
    <property type="term" value="F:UMP kinase activity"/>
    <property type="evidence" value="ECO:0007669"/>
    <property type="project" value="UniProtKB-EC"/>
</dbReference>
<dbReference type="GO" id="GO:0044210">
    <property type="term" value="P:'de novo' CTP biosynthetic process"/>
    <property type="evidence" value="ECO:0007669"/>
    <property type="project" value="UniProtKB-UniRule"/>
</dbReference>
<dbReference type="GO" id="GO:0006225">
    <property type="term" value="P:UDP biosynthetic process"/>
    <property type="evidence" value="ECO:0007669"/>
    <property type="project" value="TreeGrafter"/>
</dbReference>
<dbReference type="CDD" id="cd04253">
    <property type="entry name" value="AAK_UMPK-PyrH-Pf"/>
    <property type="match status" value="1"/>
</dbReference>
<dbReference type="FunFam" id="3.40.1160.10:FF:000030">
    <property type="entry name" value="Uridylate kinase"/>
    <property type="match status" value="1"/>
</dbReference>
<dbReference type="Gene3D" id="3.40.1160.10">
    <property type="entry name" value="Acetylglutamate kinase-like"/>
    <property type="match status" value="1"/>
</dbReference>
<dbReference type="HAMAP" id="MF_01220_A">
    <property type="entry name" value="PyrH_A"/>
    <property type="match status" value="1"/>
</dbReference>
<dbReference type="InterPro" id="IPR036393">
    <property type="entry name" value="AceGlu_kinase-like_sf"/>
</dbReference>
<dbReference type="InterPro" id="IPR001048">
    <property type="entry name" value="Asp/Glu/Uridylate_kinase"/>
</dbReference>
<dbReference type="InterPro" id="IPR011817">
    <property type="entry name" value="Uridylate_kinase"/>
</dbReference>
<dbReference type="InterPro" id="IPR011818">
    <property type="entry name" value="Uridylate_kinase_arch/spir"/>
</dbReference>
<dbReference type="NCBIfam" id="TIGR02076">
    <property type="entry name" value="pyrH_arch"/>
    <property type="match status" value="1"/>
</dbReference>
<dbReference type="PANTHER" id="PTHR42833">
    <property type="entry name" value="URIDYLATE KINASE"/>
    <property type="match status" value="1"/>
</dbReference>
<dbReference type="PANTHER" id="PTHR42833:SF4">
    <property type="entry name" value="URIDYLATE KINASE PUMPKIN, CHLOROPLASTIC"/>
    <property type="match status" value="1"/>
</dbReference>
<dbReference type="Pfam" id="PF00696">
    <property type="entry name" value="AA_kinase"/>
    <property type="match status" value="1"/>
</dbReference>
<dbReference type="PIRSF" id="PIRSF005650">
    <property type="entry name" value="Uridylate_kin"/>
    <property type="match status" value="1"/>
</dbReference>
<dbReference type="SUPFAM" id="SSF53633">
    <property type="entry name" value="Carbamate kinase-like"/>
    <property type="match status" value="1"/>
</dbReference>
<reference key="1">
    <citation type="journal article" date="2009" name="Proc. Natl. Acad. Sci. U.S.A.">
        <title>Biogeography of the Sulfolobus islandicus pan-genome.</title>
        <authorList>
            <person name="Reno M.L."/>
            <person name="Held N.L."/>
            <person name="Fields C.J."/>
            <person name="Burke P.V."/>
            <person name="Whitaker R.J."/>
        </authorList>
    </citation>
    <scope>NUCLEOTIDE SEQUENCE [LARGE SCALE GENOMIC DNA]</scope>
    <source>
        <strain>L.S.2.15 / Lassen #1</strain>
    </source>
</reference>
<name>PYRH_SACI2</name>
<comment type="function">
    <text evidence="1">Catalyzes the reversible phosphorylation of UMP to UDP.</text>
</comment>
<comment type="catalytic activity">
    <reaction evidence="1">
        <text>UMP + ATP = UDP + ADP</text>
        <dbReference type="Rhea" id="RHEA:24400"/>
        <dbReference type="ChEBI" id="CHEBI:30616"/>
        <dbReference type="ChEBI" id="CHEBI:57865"/>
        <dbReference type="ChEBI" id="CHEBI:58223"/>
        <dbReference type="ChEBI" id="CHEBI:456216"/>
        <dbReference type="EC" id="2.7.4.22"/>
    </reaction>
</comment>
<comment type="activity regulation">
    <text evidence="1">Inhibited by UTP.</text>
</comment>
<comment type="pathway">
    <text evidence="1">Pyrimidine metabolism; CTP biosynthesis via de novo pathway; UDP from UMP (UMPK route): step 1/1.</text>
</comment>
<comment type="subunit">
    <text evidence="1">Homohexamer.</text>
</comment>
<comment type="subcellular location">
    <subcellularLocation>
        <location evidence="1">Cytoplasm</location>
    </subcellularLocation>
</comment>
<comment type="similarity">
    <text evidence="1">Belongs to the UMP kinase family.</text>
</comment>